<feature type="signal peptide" evidence="2">
    <location>
        <begin position="1"/>
        <end position="50"/>
    </location>
</feature>
<feature type="chain" id="PRO_0000369105" description="Outer capsid glycoprotein VP7" evidence="2">
    <location>
        <begin position="51"/>
        <end position="326"/>
    </location>
</feature>
<feature type="region of interest" description="CNP motif; interaction with ITGAV/ITGB3" evidence="2">
    <location>
        <begin position="165"/>
        <end position="167"/>
    </location>
</feature>
<feature type="region of interest" description="GPR motif; interaction with ITGAX/ITGB2" evidence="2">
    <location>
        <begin position="253"/>
        <end position="255"/>
    </location>
</feature>
<feature type="binding site" evidence="2">
    <location>
        <position position="95"/>
    </location>
    <ligand>
        <name>Ca(2+)</name>
        <dbReference type="ChEBI" id="CHEBI:29108"/>
        <label>1</label>
    </ligand>
</feature>
<feature type="binding site" evidence="2">
    <location>
        <position position="177"/>
    </location>
    <ligand>
        <name>Ca(2+)</name>
        <dbReference type="ChEBI" id="CHEBI:29108"/>
        <label>2</label>
    </ligand>
</feature>
<feature type="binding site" evidence="2">
    <location>
        <position position="206"/>
    </location>
    <ligand>
        <name>Ca(2+)</name>
        <dbReference type="ChEBI" id="CHEBI:29108"/>
        <label>1</label>
    </ligand>
</feature>
<feature type="binding site" evidence="2">
    <location>
        <position position="214"/>
    </location>
    <ligand>
        <name>Ca(2+)</name>
        <dbReference type="ChEBI" id="CHEBI:29108"/>
        <label>1</label>
    </ligand>
</feature>
<feature type="binding site" evidence="2">
    <location>
        <position position="216"/>
    </location>
    <ligand>
        <name>Ca(2+)</name>
        <dbReference type="ChEBI" id="CHEBI:29108"/>
        <label>1</label>
    </ligand>
</feature>
<feature type="binding site" evidence="2">
    <location>
        <position position="228"/>
    </location>
    <ligand>
        <name>Ca(2+)</name>
        <dbReference type="ChEBI" id="CHEBI:29108"/>
        <label>2</label>
    </ligand>
</feature>
<feature type="binding site" evidence="2">
    <location>
        <position position="229"/>
    </location>
    <ligand>
        <name>Ca(2+)</name>
        <dbReference type="ChEBI" id="CHEBI:29108"/>
        <label>2</label>
    </ligand>
</feature>
<feature type="binding site" evidence="2">
    <location>
        <position position="231"/>
    </location>
    <ligand>
        <name>Ca(2+)</name>
        <dbReference type="ChEBI" id="CHEBI:29108"/>
        <label>2</label>
    </ligand>
</feature>
<feature type="binding site" evidence="2">
    <location>
        <position position="301"/>
    </location>
    <ligand>
        <name>Ca(2+)</name>
        <dbReference type="ChEBI" id="CHEBI:29108"/>
        <label>2</label>
    </ligand>
</feature>
<feature type="glycosylation site" description="N-linked (GlcNAc...) asparagine; by host" evidence="1">
    <location>
        <position position="69"/>
    </location>
</feature>
<feature type="glycosylation site" description="N-linked (GlcNAc...) asparagine; by host" evidence="1">
    <location>
        <position position="238"/>
    </location>
</feature>
<feature type="disulfide bond" evidence="2">
    <location>
        <begin position="82"/>
        <end position="135"/>
    </location>
</feature>
<feature type="disulfide bond" evidence="2">
    <location>
        <begin position="165"/>
        <end position="249"/>
    </location>
</feature>
<feature type="disulfide bond" evidence="2">
    <location>
        <begin position="191"/>
        <end position="244"/>
    </location>
</feature>
<feature type="disulfide bond" evidence="2">
    <location>
        <begin position="196"/>
        <end position="207"/>
    </location>
</feature>
<feature type="splice variant" id="VSP_038603" description="In isoform 2." evidence="3">
    <location>
        <begin position="1"/>
        <end position="29"/>
    </location>
</feature>
<evidence type="ECO:0000255" key="1"/>
<evidence type="ECO:0000255" key="2">
    <source>
        <dbReference type="HAMAP-Rule" id="MF_04131"/>
    </source>
</evidence>
<evidence type="ECO:0000305" key="3"/>
<organismHost>
    <name type="scientific">Mus musculus musculus</name>
    <name type="common">eastern European house mouse</name>
    <dbReference type="NCBI Taxonomy" id="39442"/>
</organismHost>
<keyword id="KW-0024">Alternative initiation</keyword>
<keyword id="KW-0106">Calcium</keyword>
<keyword id="KW-0167">Capsid protein</keyword>
<keyword id="KW-1015">Disulfide bond</keyword>
<keyword id="KW-0325">Glycoprotein</keyword>
<keyword id="KW-1038">Host endoplasmic reticulum</keyword>
<keyword id="KW-0945">Host-virus interaction</keyword>
<keyword id="KW-0479">Metal-binding</keyword>
<keyword id="KW-1152">Outer capsid protein</keyword>
<keyword id="KW-0732">Signal</keyword>
<keyword id="KW-1146">T=13 icosahedral capsid protein</keyword>
<keyword id="KW-0946">Virion</keyword>
<proteinExistence type="inferred from homology"/>
<sequence>MYGIEYTTALTFLISFLLLRYILKLVVKIMDFIVYRFLFVILILSPCIKAQNYGINLPITGSMDMAYANSTQSETFLTSTLCLYYPKEAATEINDNSWKDTLSQLFMTKGWPTGSVYFKEYNDIAVFSIDPQLYCDYNVVLMKYDASLQMDMSELADLILNEWLCNPMDITLYYYQQTDETNKWISMGSSCTIKVCPLNTQTLGIGCLTTDATTFEEIATAEKLAITDVVDGVNHKLNVTTTTCTIRNCKKLGPRENVAVIQIGGSDVIDITADPTTAPQTERMMRINWKKWWQVFYTVVDYVNQIISAMSKRSRSLNSAAFYYRV</sequence>
<comment type="function">
    <text evidence="2">Calcium-binding protein that interacts with rotavirus cell receptors once the initial attachment by VP4 has been achieved. Rotavirus attachment and entry into the host cell probably involves multiple sequential contacts between the outer capsid proteins VP4 and VP7, and the cell receptors. Following entry into the host cell, low intracellular or intravesicular Ca(2+) concentration probably causes the calcium-stabilized VP7 trimers to dissociate from the virion. This step is probably necessary for the membrane-disrupting entry step and the release of VP4, which is locked onto the virion by VP7.</text>
</comment>
<comment type="subunit">
    <text evidence="2">Homotrimer; disulfide-linked. 2 Ca(2+) ions bound at each subunit interface in the trimer hold the trimer together. Interacts with the intermediate capsid protein VP6. Interacts with the outer capsid protein VP5*.</text>
</comment>
<comment type="subcellular location">
    <subcellularLocation>
        <location evidence="2">Virion</location>
    </subcellularLocation>
    <subcellularLocation>
        <location evidence="2">Host endoplasmic reticulum lumen</location>
    </subcellularLocation>
    <text evidence="2">The outer layer contains 780 copies of VP7, grouped as 260 trimers. Immature double-layered particles assembled in the cytoplasm bud across the membrane of the endoplasmic reticulum, acquiring during this process a transient lipid membrane that is modified with the ER resident viral glycoproteins NSP4 and VP7; these enveloped particles also contain VP4. As the particles move towards the interior of the ER cisternae, the transient lipid membrane and the non-structural protein NSP4 are lost, while the virus surface proteins VP4 and VP7 rearrange to form the outermost virus protein layer, yielding mature infectious triple-layered particles.</text>
</comment>
<comment type="alternative products">
    <event type="alternative initiation"/>
    <isoform>
        <id>Q83441-1</id>
        <name>1</name>
        <sequence type="displayed"/>
    </isoform>
    <isoform>
        <id>Q83441-2</id>
        <name>2</name>
        <sequence type="described" ref="VSP_038603"/>
    </isoform>
</comment>
<comment type="PTM">
    <text evidence="2">N-glycosylated.</text>
</comment>
<comment type="PTM">
    <text evidence="2">The N-terminus is blocked possibly by pyroglutamic acid.</text>
</comment>
<comment type="miscellaneous">
    <text evidence="2">Some rotavirus strains are neuraminidase-sensitive and require sialic acid to attach to the cell surface. Some rotavirus strains are integrin-dependent. Some rotavirus strains depend on ganglioside for their entry into the host cell. Hsp70 also seems to be involved in the entry of some strains.</text>
</comment>
<comment type="miscellaneous">
    <text evidence="2">In group A rotaviruses, VP7 defines the G serotype.</text>
</comment>
<comment type="miscellaneous">
    <molecule>Isoform 2</molecule>
    <text evidence="3">Produced by alternative initiation at Met-30 of isoform 1.</text>
</comment>
<comment type="similarity">
    <text evidence="2">Belongs to the rotavirus VP7 family.</text>
</comment>
<name>VP7_ROTMB</name>
<reference key="1">
    <citation type="journal article" date="1994" name="Virology">
        <title>Comparison of VP4 and VP7 of five murine rotavirus strains.</title>
        <authorList>
            <person name="Dunn S.J."/>
            <person name="Burns J.W."/>
            <person name="Cross T.L."/>
            <person name="Vo P.T."/>
            <person name="Ward R.L."/>
            <person name="Bremont M."/>
            <person name="Greenberg H.B."/>
        </authorList>
    </citation>
    <scope>NUCLEOTIDE SEQUENCE [GENOMIC RNA]</scope>
</reference>
<accession>Q83441</accession>
<dbReference type="EMBL" id="U08420">
    <property type="protein sequence ID" value="AAA50483.1"/>
    <property type="molecule type" value="Genomic_RNA"/>
</dbReference>
<dbReference type="SMR" id="Q83441"/>
<dbReference type="GO" id="GO:0044166">
    <property type="term" value="C:host cell endoplasmic reticulum lumen"/>
    <property type="evidence" value="ECO:0007669"/>
    <property type="project" value="UniProtKB-SubCell"/>
</dbReference>
<dbReference type="GO" id="GO:0039621">
    <property type="term" value="C:T=13 icosahedral viral capsid"/>
    <property type="evidence" value="ECO:0007669"/>
    <property type="project" value="UniProtKB-UniRule"/>
</dbReference>
<dbReference type="GO" id="GO:0039624">
    <property type="term" value="C:viral outer capsid"/>
    <property type="evidence" value="ECO:0007669"/>
    <property type="project" value="UniProtKB-UniRule"/>
</dbReference>
<dbReference type="GO" id="GO:0046872">
    <property type="term" value="F:metal ion binding"/>
    <property type="evidence" value="ECO:0007669"/>
    <property type="project" value="UniProtKB-KW"/>
</dbReference>
<dbReference type="Gene3D" id="3.40.50.11130">
    <property type="entry name" value="Glycoprotein VP7, domain 1"/>
    <property type="match status" value="1"/>
</dbReference>
<dbReference type="Gene3D" id="2.60.120.800">
    <property type="entry name" value="Rotavirus outer-layer protein VP7, domain 2"/>
    <property type="match status" value="1"/>
</dbReference>
<dbReference type="HAMAP" id="MF_04130">
    <property type="entry name" value="Rota_VP7"/>
    <property type="match status" value="1"/>
</dbReference>
<dbReference type="HAMAP" id="MF_04131">
    <property type="entry name" value="Rota_VP7_A"/>
    <property type="match status" value="1"/>
</dbReference>
<dbReference type="InterPro" id="IPR001963">
    <property type="entry name" value="VP7"/>
</dbReference>
<dbReference type="InterPro" id="IPR042207">
    <property type="entry name" value="VP7_1"/>
</dbReference>
<dbReference type="InterPro" id="IPR042210">
    <property type="entry name" value="VP7_2"/>
</dbReference>
<dbReference type="Pfam" id="PF00434">
    <property type="entry name" value="VP7"/>
    <property type="match status" value="1"/>
</dbReference>
<organism>
    <name type="scientific">Rotavirus A (isolate RVA/Mouse/United States/Eb/1982/G16P10[16])</name>
    <name type="common">RV-A</name>
    <dbReference type="NCBI Taxonomy" id="578842"/>
    <lineage>
        <taxon>Viruses</taxon>
        <taxon>Riboviria</taxon>
        <taxon>Orthornavirae</taxon>
        <taxon>Duplornaviricota</taxon>
        <taxon>Resentoviricetes</taxon>
        <taxon>Reovirales</taxon>
        <taxon>Sedoreoviridae</taxon>
        <taxon>Rotavirus</taxon>
        <taxon>Rotavirus A</taxon>
    </lineage>
</organism>
<protein>
    <recommendedName>
        <fullName evidence="2">Outer capsid glycoprotein VP7</fullName>
    </recommendedName>
</protein>